<comment type="function">
    <text evidence="1">Catalyzes the deamination of 5-methylthioadenosine and S-adenosyl-L-homocysteine into 5-methylthioinosine and S-inosyl-L-homocysteine, respectively. Is also able to deaminate adenosine.</text>
</comment>
<comment type="catalytic activity">
    <reaction evidence="1">
        <text>S-adenosyl-L-homocysteine + H2O + H(+) = S-inosyl-L-homocysteine + NH4(+)</text>
        <dbReference type="Rhea" id="RHEA:20716"/>
        <dbReference type="ChEBI" id="CHEBI:15377"/>
        <dbReference type="ChEBI" id="CHEBI:15378"/>
        <dbReference type="ChEBI" id="CHEBI:28938"/>
        <dbReference type="ChEBI" id="CHEBI:57856"/>
        <dbReference type="ChEBI" id="CHEBI:57985"/>
        <dbReference type="EC" id="3.5.4.28"/>
    </reaction>
</comment>
<comment type="catalytic activity">
    <reaction evidence="1">
        <text>S-methyl-5'-thioadenosine + H2O + H(+) = S-methyl-5'-thioinosine + NH4(+)</text>
        <dbReference type="Rhea" id="RHEA:25025"/>
        <dbReference type="ChEBI" id="CHEBI:15377"/>
        <dbReference type="ChEBI" id="CHEBI:15378"/>
        <dbReference type="ChEBI" id="CHEBI:17509"/>
        <dbReference type="ChEBI" id="CHEBI:28938"/>
        <dbReference type="ChEBI" id="CHEBI:48595"/>
        <dbReference type="EC" id="3.5.4.31"/>
    </reaction>
</comment>
<comment type="cofactor">
    <cofactor evidence="1">
        <name>Zn(2+)</name>
        <dbReference type="ChEBI" id="CHEBI:29105"/>
    </cofactor>
    <text evidence="1">Binds 1 zinc ion per subunit.</text>
</comment>
<comment type="similarity">
    <text evidence="1">Belongs to the metallo-dependent hydrolases superfamily. MTA/SAH deaminase family.</text>
</comment>
<name>MTAD_BACCR</name>
<proteinExistence type="inferred from homology"/>
<reference key="1">
    <citation type="journal article" date="2003" name="Nature">
        <title>Genome sequence of Bacillus cereus and comparative analysis with Bacillus anthracis.</title>
        <authorList>
            <person name="Ivanova N."/>
            <person name="Sorokin A."/>
            <person name="Anderson I."/>
            <person name="Galleron N."/>
            <person name="Candelon B."/>
            <person name="Kapatral V."/>
            <person name="Bhattacharyya A."/>
            <person name="Reznik G."/>
            <person name="Mikhailova N."/>
            <person name="Lapidus A."/>
            <person name="Chu L."/>
            <person name="Mazur M."/>
            <person name="Goltsman E."/>
            <person name="Larsen N."/>
            <person name="D'Souza M."/>
            <person name="Walunas T."/>
            <person name="Grechkin Y."/>
            <person name="Pusch G."/>
            <person name="Haselkorn R."/>
            <person name="Fonstein M."/>
            <person name="Ehrlich S.D."/>
            <person name="Overbeek R."/>
            <person name="Kyrpides N.C."/>
        </authorList>
    </citation>
    <scope>NUCLEOTIDE SEQUENCE [LARGE SCALE GENOMIC DNA]</scope>
    <source>
        <strain>ATCC 14579 / DSM 31 / CCUG 7414 / JCM 2152 / NBRC 15305 / NCIMB 9373 / NCTC 2599 / NRRL B-3711</strain>
    </source>
</reference>
<accession>Q81F14</accession>
<feature type="chain" id="PRO_0000312443" description="5-methylthioadenosine/S-adenosylhomocysteine deaminase">
    <location>
        <begin position="1"/>
        <end position="435"/>
    </location>
</feature>
<feature type="binding site" evidence="1">
    <location>
        <position position="65"/>
    </location>
    <ligand>
        <name>Zn(2+)</name>
        <dbReference type="ChEBI" id="CHEBI:29105"/>
    </ligand>
</feature>
<feature type="binding site" evidence="1">
    <location>
        <position position="67"/>
    </location>
    <ligand>
        <name>Zn(2+)</name>
        <dbReference type="ChEBI" id="CHEBI:29105"/>
    </ligand>
</feature>
<feature type="binding site" evidence="1">
    <location>
        <position position="94"/>
    </location>
    <ligand>
        <name>substrate</name>
    </ligand>
</feature>
<feature type="binding site" evidence="1">
    <location>
        <position position="150"/>
    </location>
    <ligand>
        <name>substrate</name>
    </ligand>
</feature>
<feature type="binding site" evidence="1">
    <location>
        <position position="189"/>
    </location>
    <ligand>
        <name>substrate</name>
    </ligand>
</feature>
<feature type="binding site" evidence="1">
    <location>
        <position position="216"/>
    </location>
    <ligand>
        <name>Zn(2+)</name>
        <dbReference type="ChEBI" id="CHEBI:29105"/>
    </ligand>
</feature>
<feature type="binding site" evidence="1">
    <location>
        <position position="219"/>
    </location>
    <ligand>
        <name>substrate</name>
    </ligand>
</feature>
<feature type="binding site" evidence="1">
    <location>
        <position position="304"/>
    </location>
    <ligand>
        <name>substrate</name>
    </ligand>
</feature>
<feature type="binding site" evidence="1">
    <location>
        <position position="304"/>
    </location>
    <ligand>
        <name>Zn(2+)</name>
        <dbReference type="ChEBI" id="CHEBI:29105"/>
    </ligand>
</feature>
<dbReference type="EC" id="3.5.4.28" evidence="1"/>
<dbReference type="EC" id="3.5.4.31" evidence="1"/>
<dbReference type="EMBL" id="AE016877">
    <property type="protein sequence ID" value="AAP08767.1"/>
    <property type="molecule type" value="Genomic_DNA"/>
</dbReference>
<dbReference type="RefSeq" id="NP_831566.1">
    <property type="nucleotide sequence ID" value="NC_004722.1"/>
</dbReference>
<dbReference type="SMR" id="Q81F14"/>
<dbReference type="STRING" id="226900.BC_1793"/>
<dbReference type="KEGG" id="bce:BC1793"/>
<dbReference type="PATRIC" id="fig|226900.8.peg.1783"/>
<dbReference type="HOGENOM" id="CLU_012358_2_0_9"/>
<dbReference type="Proteomes" id="UP000001417">
    <property type="component" value="Chromosome"/>
</dbReference>
<dbReference type="GO" id="GO:0090614">
    <property type="term" value="F:5'-methylthioadenosine deaminase activity"/>
    <property type="evidence" value="ECO:0007669"/>
    <property type="project" value="UniProtKB-UniRule"/>
</dbReference>
<dbReference type="GO" id="GO:0004000">
    <property type="term" value="F:adenosine deaminase activity"/>
    <property type="evidence" value="ECO:0000314"/>
    <property type="project" value="CACAO"/>
</dbReference>
<dbReference type="GO" id="GO:0046872">
    <property type="term" value="F:metal ion binding"/>
    <property type="evidence" value="ECO:0007669"/>
    <property type="project" value="UniProtKB-KW"/>
</dbReference>
<dbReference type="GO" id="GO:0050270">
    <property type="term" value="F:S-adenosylhomocysteine deaminase activity"/>
    <property type="evidence" value="ECO:0007669"/>
    <property type="project" value="UniProtKB-UniRule"/>
</dbReference>
<dbReference type="CDD" id="cd01298">
    <property type="entry name" value="ATZ_TRZ_like"/>
    <property type="match status" value="1"/>
</dbReference>
<dbReference type="FunFam" id="3.20.20.140:FF:000014">
    <property type="entry name" value="5-methylthioadenosine/S-adenosylhomocysteine deaminase"/>
    <property type="match status" value="1"/>
</dbReference>
<dbReference type="Gene3D" id="3.20.20.140">
    <property type="entry name" value="Metal-dependent hydrolases"/>
    <property type="match status" value="1"/>
</dbReference>
<dbReference type="Gene3D" id="2.30.40.10">
    <property type="entry name" value="Urease, subunit C, domain 1"/>
    <property type="match status" value="1"/>
</dbReference>
<dbReference type="HAMAP" id="MF_01281">
    <property type="entry name" value="MTA_SAH_deamin"/>
    <property type="match status" value="1"/>
</dbReference>
<dbReference type="InterPro" id="IPR006680">
    <property type="entry name" value="Amidohydro-rel"/>
</dbReference>
<dbReference type="InterPro" id="IPR023512">
    <property type="entry name" value="Deaminase_MtaD/DadD"/>
</dbReference>
<dbReference type="InterPro" id="IPR011059">
    <property type="entry name" value="Metal-dep_hydrolase_composite"/>
</dbReference>
<dbReference type="InterPro" id="IPR032466">
    <property type="entry name" value="Metal_Hydrolase"/>
</dbReference>
<dbReference type="InterPro" id="IPR050287">
    <property type="entry name" value="MTA/SAH_deaminase"/>
</dbReference>
<dbReference type="NCBIfam" id="NF012037">
    <property type="entry name" value="PRK15493.1"/>
    <property type="match status" value="1"/>
</dbReference>
<dbReference type="PANTHER" id="PTHR43794:SF11">
    <property type="entry name" value="AMIDOHYDROLASE-RELATED DOMAIN-CONTAINING PROTEIN"/>
    <property type="match status" value="1"/>
</dbReference>
<dbReference type="PANTHER" id="PTHR43794">
    <property type="entry name" value="AMINOHYDROLASE SSNA-RELATED"/>
    <property type="match status" value="1"/>
</dbReference>
<dbReference type="Pfam" id="PF01979">
    <property type="entry name" value="Amidohydro_1"/>
    <property type="match status" value="1"/>
</dbReference>
<dbReference type="SUPFAM" id="SSF51338">
    <property type="entry name" value="Composite domain of metallo-dependent hydrolases"/>
    <property type="match status" value="1"/>
</dbReference>
<dbReference type="SUPFAM" id="SSF51556">
    <property type="entry name" value="Metallo-dependent hydrolases"/>
    <property type="match status" value="1"/>
</dbReference>
<organism>
    <name type="scientific">Bacillus cereus (strain ATCC 14579 / DSM 31 / CCUG 7414 / JCM 2152 / NBRC 15305 / NCIMB 9373 / NCTC 2599 / NRRL B-3711)</name>
    <dbReference type="NCBI Taxonomy" id="226900"/>
    <lineage>
        <taxon>Bacteria</taxon>
        <taxon>Bacillati</taxon>
        <taxon>Bacillota</taxon>
        <taxon>Bacilli</taxon>
        <taxon>Bacillales</taxon>
        <taxon>Bacillaceae</taxon>
        <taxon>Bacillus</taxon>
        <taxon>Bacillus cereus group</taxon>
    </lineage>
</organism>
<keyword id="KW-0378">Hydrolase</keyword>
<keyword id="KW-0479">Metal-binding</keyword>
<keyword id="KW-1185">Reference proteome</keyword>
<keyword id="KW-0862">Zinc</keyword>
<protein>
    <recommendedName>
        <fullName evidence="1">5-methylthioadenosine/S-adenosylhomocysteine deaminase</fullName>
        <shortName evidence="1">MTA/SAH deaminase</shortName>
        <ecNumber evidence="1">3.5.4.28</ecNumber>
        <ecNumber evidence="1">3.5.4.31</ecNumber>
    </recommendedName>
</protein>
<evidence type="ECO:0000255" key="1">
    <source>
        <dbReference type="HAMAP-Rule" id="MF_01281"/>
    </source>
</evidence>
<gene>
    <name evidence="1" type="primary">mtaD</name>
    <name type="ordered locus">BC_1793</name>
</gene>
<sequence length="435" mass="48123">MKTTYVNATIVTMNEQNEVIENGYIIVENDQIIDVKSGEFANDFEVDEVIDMKGKWVLPGLVNTHTHVVMSLLRGIGDDMLLQPWLETRIWPLESQFTPELAVASTELGLLEMVKSGTTSFSDMFNPIGVDQDAIMETVSRSGMRAAVSRTLFSFGTKDDEKKAIEEAEKYVKRYYNESDMLTTMVAPHSPYTCSTELLEECARIAVENQTMVHIHLSETEREVRDIEAQYGKRPVEYAASCGLFKRPTVIAHGVVLNDDERAFLAEHDVRVAHNPNSNLKLGSGIANVKAMLEAGIKVGIATDSVASNNNLDMFEEMRIATLLQKGIHQDATALPVETALSLATKGAAEVIGMKQTGSLEAGKCADFITIDPSNKPHLQPADEVLSHLVYAASGKDISDVIINGKHVVWNGECKTLDEERIIFEASRYKRGLQR</sequence>